<protein>
    <recommendedName>
        <fullName evidence="1">Probable dual-specificity RNA methyltransferase RlmN</fullName>
        <ecNumber evidence="1">2.1.1.192</ecNumber>
    </recommendedName>
    <alternativeName>
        <fullName evidence="1">23S rRNA (adenine(2503)-C(2))-methyltransferase</fullName>
    </alternativeName>
    <alternativeName>
        <fullName evidence="1">23S rRNA m2A2503 methyltransferase</fullName>
    </alternativeName>
    <alternativeName>
        <fullName evidence="1">Ribosomal RNA large subunit methyltransferase N</fullName>
    </alternativeName>
    <alternativeName>
        <fullName evidence="1">tRNA (adenine(37)-C(2))-methyltransferase</fullName>
    </alternativeName>
    <alternativeName>
        <fullName evidence="1">tRNA m2A37 methyltransferase</fullName>
    </alternativeName>
</protein>
<reference key="1">
    <citation type="journal article" date="2008" name="Genome Res.">
        <title>The genome of Pelotomaculum thermopropionicum reveals niche-associated evolution in anaerobic microbiota.</title>
        <authorList>
            <person name="Kosaka T."/>
            <person name="Kato S."/>
            <person name="Shimoyama T."/>
            <person name="Ishii S."/>
            <person name="Abe T."/>
            <person name="Watanabe K."/>
        </authorList>
    </citation>
    <scope>NUCLEOTIDE SEQUENCE [LARGE SCALE GENOMIC DNA]</scope>
    <source>
        <strain>DSM 13744 / JCM 10971 / SI</strain>
    </source>
</reference>
<name>RLMN_PELTS</name>
<gene>
    <name evidence="1" type="primary">rlmN</name>
    <name type="ordered locus">PTH_1787</name>
</gene>
<keyword id="KW-0004">4Fe-4S</keyword>
<keyword id="KW-0963">Cytoplasm</keyword>
<keyword id="KW-1015">Disulfide bond</keyword>
<keyword id="KW-0408">Iron</keyword>
<keyword id="KW-0411">Iron-sulfur</keyword>
<keyword id="KW-0479">Metal-binding</keyword>
<keyword id="KW-0489">Methyltransferase</keyword>
<keyword id="KW-1185">Reference proteome</keyword>
<keyword id="KW-0698">rRNA processing</keyword>
<keyword id="KW-0949">S-adenosyl-L-methionine</keyword>
<keyword id="KW-0808">Transferase</keyword>
<keyword id="KW-0819">tRNA processing</keyword>
<comment type="function">
    <text evidence="1">Specifically methylates position 2 of adenine 2503 in 23S rRNA and position 2 of adenine 37 in tRNAs.</text>
</comment>
<comment type="catalytic activity">
    <reaction evidence="1">
        <text>adenosine(2503) in 23S rRNA + 2 reduced [2Fe-2S]-[ferredoxin] + 2 S-adenosyl-L-methionine = 2-methyladenosine(2503) in 23S rRNA + 5'-deoxyadenosine + L-methionine + 2 oxidized [2Fe-2S]-[ferredoxin] + S-adenosyl-L-homocysteine</text>
        <dbReference type="Rhea" id="RHEA:42916"/>
        <dbReference type="Rhea" id="RHEA-COMP:10000"/>
        <dbReference type="Rhea" id="RHEA-COMP:10001"/>
        <dbReference type="Rhea" id="RHEA-COMP:10152"/>
        <dbReference type="Rhea" id="RHEA-COMP:10282"/>
        <dbReference type="ChEBI" id="CHEBI:17319"/>
        <dbReference type="ChEBI" id="CHEBI:33737"/>
        <dbReference type="ChEBI" id="CHEBI:33738"/>
        <dbReference type="ChEBI" id="CHEBI:57844"/>
        <dbReference type="ChEBI" id="CHEBI:57856"/>
        <dbReference type="ChEBI" id="CHEBI:59789"/>
        <dbReference type="ChEBI" id="CHEBI:74411"/>
        <dbReference type="ChEBI" id="CHEBI:74497"/>
        <dbReference type="EC" id="2.1.1.192"/>
    </reaction>
</comment>
<comment type="catalytic activity">
    <reaction evidence="1">
        <text>adenosine(37) in tRNA + 2 reduced [2Fe-2S]-[ferredoxin] + 2 S-adenosyl-L-methionine = 2-methyladenosine(37) in tRNA + 5'-deoxyadenosine + L-methionine + 2 oxidized [2Fe-2S]-[ferredoxin] + S-adenosyl-L-homocysteine</text>
        <dbReference type="Rhea" id="RHEA:43332"/>
        <dbReference type="Rhea" id="RHEA-COMP:10000"/>
        <dbReference type="Rhea" id="RHEA-COMP:10001"/>
        <dbReference type="Rhea" id="RHEA-COMP:10162"/>
        <dbReference type="Rhea" id="RHEA-COMP:10485"/>
        <dbReference type="ChEBI" id="CHEBI:17319"/>
        <dbReference type="ChEBI" id="CHEBI:33737"/>
        <dbReference type="ChEBI" id="CHEBI:33738"/>
        <dbReference type="ChEBI" id="CHEBI:57844"/>
        <dbReference type="ChEBI" id="CHEBI:57856"/>
        <dbReference type="ChEBI" id="CHEBI:59789"/>
        <dbReference type="ChEBI" id="CHEBI:74411"/>
        <dbReference type="ChEBI" id="CHEBI:74497"/>
        <dbReference type="EC" id="2.1.1.192"/>
    </reaction>
</comment>
<comment type="cofactor">
    <cofactor evidence="1">
        <name>[4Fe-4S] cluster</name>
        <dbReference type="ChEBI" id="CHEBI:49883"/>
    </cofactor>
    <text evidence="1">Binds 1 [4Fe-4S] cluster. The cluster is coordinated with 3 cysteines and an exchangeable S-adenosyl-L-methionine.</text>
</comment>
<comment type="subcellular location">
    <subcellularLocation>
        <location evidence="1">Cytoplasm</location>
    </subcellularLocation>
</comment>
<comment type="miscellaneous">
    <text evidence="1">Reaction proceeds by a ping-pong mechanism involving intermediate methylation of a conserved cysteine residue.</text>
</comment>
<comment type="similarity">
    <text evidence="1">Belongs to the radical SAM superfamily. RlmN family.</text>
</comment>
<organism>
    <name type="scientific">Pelotomaculum thermopropionicum (strain DSM 13744 / JCM 10971 / SI)</name>
    <dbReference type="NCBI Taxonomy" id="370438"/>
    <lineage>
        <taxon>Bacteria</taxon>
        <taxon>Bacillati</taxon>
        <taxon>Bacillota</taxon>
        <taxon>Clostridia</taxon>
        <taxon>Eubacteriales</taxon>
        <taxon>Desulfotomaculaceae</taxon>
        <taxon>Pelotomaculum</taxon>
    </lineage>
</organism>
<accession>A5D1B6</accession>
<feature type="chain" id="PRO_0000350304" description="Probable dual-specificity RNA methyltransferase RlmN">
    <location>
        <begin position="1"/>
        <end position="368"/>
    </location>
</feature>
<feature type="domain" description="Radical SAM core" evidence="2">
    <location>
        <begin position="114"/>
        <end position="345"/>
    </location>
</feature>
<feature type="active site" description="Proton acceptor" evidence="1">
    <location>
        <position position="108"/>
    </location>
</feature>
<feature type="active site" description="S-methylcysteine intermediate" evidence="1">
    <location>
        <position position="350"/>
    </location>
</feature>
<feature type="binding site" evidence="1">
    <location>
        <position position="128"/>
    </location>
    <ligand>
        <name>[4Fe-4S] cluster</name>
        <dbReference type="ChEBI" id="CHEBI:49883"/>
        <note>4Fe-4S-S-AdoMet</note>
    </ligand>
</feature>
<feature type="binding site" evidence="1">
    <location>
        <position position="132"/>
    </location>
    <ligand>
        <name>[4Fe-4S] cluster</name>
        <dbReference type="ChEBI" id="CHEBI:49883"/>
        <note>4Fe-4S-S-AdoMet</note>
    </ligand>
</feature>
<feature type="binding site" evidence="1">
    <location>
        <position position="135"/>
    </location>
    <ligand>
        <name>[4Fe-4S] cluster</name>
        <dbReference type="ChEBI" id="CHEBI:49883"/>
        <note>4Fe-4S-S-AdoMet</note>
    </ligand>
</feature>
<feature type="binding site" evidence="1">
    <location>
        <begin position="175"/>
        <end position="176"/>
    </location>
    <ligand>
        <name>S-adenosyl-L-methionine</name>
        <dbReference type="ChEBI" id="CHEBI:59789"/>
    </ligand>
</feature>
<feature type="binding site" evidence="1">
    <location>
        <position position="207"/>
    </location>
    <ligand>
        <name>S-adenosyl-L-methionine</name>
        <dbReference type="ChEBI" id="CHEBI:59789"/>
    </ligand>
</feature>
<feature type="binding site" evidence="1">
    <location>
        <begin position="230"/>
        <end position="232"/>
    </location>
    <ligand>
        <name>S-adenosyl-L-methionine</name>
        <dbReference type="ChEBI" id="CHEBI:59789"/>
    </ligand>
</feature>
<feature type="binding site" evidence="1">
    <location>
        <position position="307"/>
    </location>
    <ligand>
        <name>S-adenosyl-L-methionine</name>
        <dbReference type="ChEBI" id="CHEBI:59789"/>
    </ligand>
</feature>
<feature type="disulfide bond" description="(transient)" evidence="1">
    <location>
        <begin position="121"/>
        <end position="350"/>
    </location>
</feature>
<sequence>MVENSFCKKEGSPVVGDRINVKDLTLAGLERLLTGMGAERYRAGQVAIWVFQKGAESFREMTNLPANLREKLDAAAVISRPEILAKKVSSKKDAVKYLFGLPDGQAVESVFMKHAYGNSVCVSTQAGCRMGCRFCASALGGLTRNLSPGEIYDQVLGIRRDTGERISSVVLMGSGEPLDNYDATLTFIKNVTAPYGLHIGCRHITVSTCGLVPGIRRLAREKLALTLAVSLHAPNDRLRDILVPVNRKYPLTELMAACRDYAQETGRRVTFEYALLAGVNDRKEHAEELVRLLKGKMPCHVNLIPANPVPERGVKTPSRLQVELFKKILERHGLAVTVRRGLGADIDAACGQLRRKIAVMGERLNTRG</sequence>
<dbReference type="EC" id="2.1.1.192" evidence="1"/>
<dbReference type="EMBL" id="AP009389">
    <property type="protein sequence ID" value="BAF59968.1"/>
    <property type="molecule type" value="Genomic_DNA"/>
</dbReference>
<dbReference type="SMR" id="A5D1B6"/>
<dbReference type="STRING" id="370438.PTH_1787"/>
<dbReference type="KEGG" id="pth:PTH_1787"/>
<dbReference type="eggNOG" id="COG0820">
    <property type="taxonomic scope" value="Bacteria"/>
</dbReference>
<dbReference type="HOGENOM" id="CLU_029101_0_1_9"/>
<dbReference type="Proteomes" id="UP000006556">
    <property type="component" value="Chromosome"/>
</dbReference>
<dbReference type="GO" id="GO:0005737">
    <property type="term" value="C:cytoplasm"/>
    <property type="evidence" value="ECO:0007669"/>
    <property type="project" value="UniProtKB-SubCell"/>
</dbReference>
<dbReference type="GO" id="GO:0051539">
    <property type="term" value="F:4 iron, 4 sulfur cluster binding"/>
    <property type="evidence" value="ECO:0007669"/>
    <property type="project" value="UniProtKB-UniRule"/>
</dbReference>
<dbReference type="GO" id="GO:0046872">
    <property type="term" value="F:metal ion binding"/>
    <property type="evidence" value="ECO:0007669"/>
    <property type="project" value="UniProtKB-KW"/>
</dbReference>
<dbReference type="GO" id="GO:0070040">
    <property type="term" value="F:rRNA (adenine(2503)-C2-)-methyltransferase activity"/>
    <property type="evidence" value="ECO:0007669"/>
    <property type="project" value="UniProtKB-UniRule"/>
</dbReference>
<dbReference type="GO" id="GO:0019843">
    <property type="term" value="F:rRNA binding"/>
    <property type="evidence" value="ECO:0007669"/>
    <property type="project" value="UniProtKB-UniRule"/>
</dbReference>
<dbReference type="GO" id="GO:0002935">
    <property type="term" value="F:tRNA (adenine(37)-C2)-methyltransferase activity"/>
    <property type="evidence" value="ECO:0007669"/>
    <property type="project" value="UniProtKB-UniRule"/>
</dbReference>
<dbReference type="GO" id="GO:0000049">
    <property type="term" value="F:tRNA binding"/>
    <property type="evidence" value="ECO:0007669"/>
    <property type="project" value="UniProtKB-UniRule"/>
</dbReference>
<dbReference type="GO" id="GO:0070475">
    <property type="term" value="P:rRNA base methylation"/>
    <property type="evidence" value="ECO:0007669"/>
    <property type="project" value="UniProtKB-UniRule"/>
</dbReference>
<dbReference type="GO" id="GO:0030488">
    <property type="term" value="P:tRNA methylation"/>
    <property type="evidence" value="ECO:0007669"/>
    <property type="project" value="UniProtKB-UniRule"/>
</dbReference>
<dbReference type="CDD" id="cd01335">
    <property type="entry name" value="Radical_SAM"/>
    <property type="match status" value="1"/>
</dbReference>
<dbReference type="FunFam" id="3.20.20.70:FF:000014">
    <property type="entry name" value="Probable dual-specificity RNA methyltransferase RlmN"/>
    <property type="match status" value="1"/>
</dbReference>
<dbReference type="Gene3D" id="1.10.150.530">
    <property type="match status" value="1"/>
</dbReference>
<dbReference type="Gene3D" id="3.20.20.70">
    <property type="entry name" value="Aldolase class I"/>
    <property type="match status" value="1"/>
</dbReference>
<dbReference type="HAMAP" id="MF_01849">
    <property type="entry name" value="RNA_methyltr_RlmN"/>
    <property type="match status" value="1"/>
</dbReference>
<dbReference type="InterPro" id="IPR013785">
    <property type="entry name" value="Aldolase_TIM"/>
</dbReference>
<dbReference type="InterPro" id="IPR006638">
    <property type="entry name" value="Elp3/MiaA/NifB-like_rSAM"/>
</dbReference>
<dbReference type="InterPro" id="IPR040072">
    <property type="entry name" value="Methyltransferase_A"/>
</dbReference>
<dbReference type="InterPro" id="IPR048641">
    <property type="entry name" value="RlmN_N"/>
</dbReference>
<dbReference type="InterPro" id="IPR027492">
    <property type="entry name" value="RNA_MTrfase_RlmN"/>
</dbReference>
<dbReference type="InterPro" id="IPR004383">
    <property type="entry name" value="rRNA_lsu_MTrfase_RlmN/Cfr"/>
</dbReference>
<dbReference type="InterPro" id="IPR007197">
    <property type="entry name" value="rSAM"/>
</dbReference>
<dbReference type="NCBIfam" id="TIGR00048">
    <property type="entry name" value="rRNA_mod_RlmN"/>
    <property type="match status" value="1"/>
</dbReference>
<dbReference type="PANTHER" id="PTHR30544">
    <property type="entry name" value="23S RRNA METHYLTRANSFERASE"/>
    <property type="match status" value="1"/>
</dbReference>
<dbReference type="PANTHER" id="PTHR30544:SF5">
    <property type="entry name" value="RADICAL SAM CORE DOMAIN-CONTAINING PROTEIN"/>
    <property type="match status" value="1"/>
</dbReference>
<dbReference type="Pfam" id="PF04055">
    <property type="entry name" value="Radical_SAM"/>
    <property type="match status" value="1"/>
</dbReference>
<dbReference type="Pfam" id="PF21016">
    <property type="entry name" value="RlmN_N"/>
    <property type="match status" value="1"/>
</dbReference>
<dbReference type="PIRSF" id="PIRSF006004">
    <property type="entry name" value="CHP00048"/>
    <property type="match status" value="1"/>
</dbReference>
<dbReference type="SFLD" id="SFLDF00275">
    <property type="entry name" value="adenosine_C2_methyltransferase"/>
    <property type="match status" value="1"/>
</dbReference>
<dbReference type="SFLD" id="SFLDS00029">
    <property type="entry name" value="Radical_SAM"/>
    <property type="match status" value="1"/>
</dbReference>
<dbReference type="SMART" id="SM00729">
    <property type="entry name" value="Elp3"/>
    <property type="match status" value="1"/>
</dbReference>
<dbReference type="SUPFAM" id="SSF102114">
    <property type="entry name" value="Radical SAM enzymes"/>
    <property type="match status" value="1"/>
</dbReference>
<dbReference type="PROSITE" id="PS51918">
    <property type="entry name" value="RADICAL_SAM"/>
    <property type="match status" value="1"/>
</dbReference>
<evidence type="ECO:0000255" key="1">
    <source>
        <dbReference type="HAMAP-Rule" id="MF_01849"/>
    </source>
</evidence>
<evidence type="ECO:0000255" key="2">
    <source>
        <dbReference type="PROSITE-ProRule" id="PRU01266"/>
    </source>
</evidence>
<proteinExistence type="inferred from homology"/>